<feature type="propeptide" id="PRO_0000459903" evidence="1">
    <location>
        <begin position="1"/>
        <end position="8"/>
    </location>
</feature>
<feature type="chain" id="PRO_1000061048" description="Large ribosomal subunit protein bL27">
    <location>
        <begin position="9"/>
        <end position="93"/>
    </location>
</feature>
<feature type="region of interest" description="Disordered" evidence="3">
    <location>
        <begin position="8"/>
        <end position="29"/>
    </location>
</feature>
<proteinExistence type="inferred from homology"/>
<comment type="PTM">
    <text evidence="1">The N-terminus is cleaved by ribosomal processing cysteine protease Prp.</text>
</comment>
<comment type="similarity">
    <text evidence="2">Belongs to the bacterial ribosomal protein bL27 family.</text>
</comment>
<sequence length="93" mass="9921">MIMDLQFFSHHKGGGSTANGRNSAGRRLGTKAADGSIVTAGSIIYRQRGTHINPGENVGRGGDDTLYAKVAGVVKFERMGRSKRKVSVYPVAE</sequence>
<keyword id="KW-1185">Reference proteome</keyword>
<keyword id="KW-0687">Ribonucleoprotein</keyword>
<keyword id="KW-0689">Ribosomal protein</keyword>
<evidence type="ECO:0000250" key="1">
    <source>
        <dbReference type="UniProtKB" id="Q2FXT0"/>
    </source>
</evidence>
<evidence type="ECO:0000255" key="2">
    <source>
        <dbReference type="HAMAP-Rule" id="MF_00539"/>
    </source>
</evidence>
<evidence type="ECO:0000256" key="3">
    <source>
        <dbReference type="SAM" id="MobiDB-lite"/>
    </source>
</evidence>
<evidence type="ECO:0000305" key="4"/>
<dbReference type="EMBL" id="CP000705">
    <property type="protein sequence ID" value="ABQ83447.1"/>
    <property type="molecule type" value="Genomic_DNA"/>
</dbReference>
<dbReference type="RefSeq" id="WP_003664006.1">
    <property type="nucleotide sequence ID" value="NZ_AZDD01000001.1"/>
</dbReference>
<dbReference type="SMR" id="A5VKS3"/>
<dbReference type="STRING" id="557436.Lreu_1190"/>
<dbReference type="KEGG" id="lre:Lreu_1190"/>
<dbReference type="PATRIC" id="fig|557436.17.peg.56"/>
<dbReference type="eggNOG" id="COG0211">
    <property type="taxonomic scope" value="Bacteria"/>
</dbReference>
<dbReference type="HOGENOM" id="CLU_095424_4_0_9"/>
<dbReference type="Proteomes" id="UP000001991">
    <property type="component" value="Chromosome"/>
</dbReference>
<dbReference type="GO" id="GO:0022625">
    <property type="term" value="C:cytosolic large ribosomal subunit"/>
    <property type="evidence" value="ECO:0007669"/>
    <property type="project" value="TreeGrafter"/>
</dbReference>
<dbReference type="GO" id="GO:0003735">
    <property type="term" value="F:structural constituent of ribosome"/>
    <property type="evidence" value="ECO:0007669"/>
    <property type="project" value="InterPro"/>
</dbReference>
<dbReference type="GO" id="GO:0006412">
    <property type="term" value="P:translation"/>
    <property type="evidence" value="ECO:0007669"/>
    <property type="project" value="UniProtKB-UniRule"/>
</dbReference>
<dbReference type="FunFam" id="2.40.50.100:FF:000004">
    <property type="entry name" value="50S ribosomal protein L27"/>
    <property type="match status" value="1"/>
</dbReference>
<dbReference type="Gene3D" id="2.40.50.100">
    <property type="match status" value="1"/>
</dbReference>
<dbReference type="HAMAP" id="MF_00539">
    <property type="entry name" value="Ribosomal_bL27"/>
    <property type="match status" value="1"/>
</dbReference>
<dbReference type="InterPro" id="IPR001684">
    <property type="entry name" value="Ribosomal_bL27"/>
</dbReference>
<dbReference type="InterPro" id="IPR018261">
    <property type="entry name" value="Ribosomal_bL27_CS"/>
</dbReference>
<dbReference type="NCBIfam" id="TIGR00062">
    <property type="entry name" value="L27"/>
    <property type="match status" value="1"/>
</dbReference>
<dbReference type="PANTHER" id="PTHR15893:SF0">
    <property type="entry name" value="LARGE RIBOSOMAL SUBUNIT PROTEIN BL27M"/>
    <property type="match status" value="1"/>
</dbReference>
<dbReference type="PANTHER" id="PTHR15893">
    <property type="entry name" value="RIBOSOMAL PROTEIN L27"/>
    <property type="match status" value="1"/>
</dbReference>
<dbReference type="Pfam" id="PF01016">
    <property type="entry name" value="Ribosomal_L27"/>
    <property type="match status" value="1"/>
</dbReference>
<dbReference type="PRINTS" id="PR00063">
    <property type="entry name" value="RIBOSOMALL27"/>
</dbReference>
<dbReference type="SUPFAM" id="SSF110324">
    <property type="entry name" value="Ribosomal L27 protein-like"/>
    <property type="match status" value="1"/>
</dbReference>
<dbReference type="PROSITE" id="PS00831">
    <property type="entry name" value="RIBOSOMAL_L27"/>
    <property type="match status" value="1"/>
</dbReference>
<reference key="1">
    <citation type="journal article" date="2011" name="PLoS Genet.">
        <title>The evolution of host specialization in the vertebrate gut symbiont Lactobacillus reuteri.</title>
        <authorList>
            <person name="Frese S.A."/>
            <person name="Benson A.K."/>
            <person name="Tannock G.W."/>
            <person name="Loach D.M."/>
            <person name="Kim J."/>
            <person name="Zhang M."/>
            <person name="Oh P.L."/>
            <person name="Heng N.C."/>
            <person name="Patil P.B."/>
            <person name="Juge N."/>
            <person name="Mackenzie D.A."/>
            <person name="Pearson B.M."/>
            <person name="Lapidus A."/>
            <person name="Dalin E."/>
            <person name="Tice H."/>
            <person name="Goltsman E."/>
            <person name="Land M."/>
            <person name="Hauser L."/>
            <person name="Ivanova N."/>
            <person name="Kyrpides N.C."/>
            <person name="Walter J."/>
        </authorList>
    </citation>
    <scope>NUCLEOTIDE SEQUENCE [LARGE SCALE GENOMIC DNA]</scope>
    <source>
        <strain>DSM 20016</strain>
    </source>
</reference>
<accession>A5VKS3</accession>
<gene>
    <name evidence="2" type="primary">rpmA</name>
    <name type="ordered locus">Lreu_1190</name>
</gene>
<name>RL27_LIMRD</name>
<organism>
    <name type="scientific">Limosilactobacillus reuteri (strain DSM 20016)</name>
    <name type="common">Lactobacillus reuteri</name>
    <dbReference type="NCBI Taxonomy" id="557436"/>
    <lineage>
        <taxon>Bacteria</taxon>
        <taxon>Bacillati</taxon>
        <taxon>Bacillota</taxon>
        <taxon>Bacilli</taxon>
        <taxon>Lactobacillales</taxon>
        <taxon>Lactobacillaceae</taxon>
        <taxon>Limosilactobacillus</taxon>
    </lineage>
</organism>
<protein>
    <recommendedName>
        <fullName evidence="2">Large ribosomal subunit protein bL27</fullName>
    </recommendedName>
    <alternativeName>
        <fullName evidence="4">50S ribosomal protein L27</fullName>
    </alternativeName>
</protein>